<reference key="1">
    <citation type="journal article" date="2011" name="PLoS Genet.">
        <title>Whole-genome comparison reveals novel genetic elements that characterize the genome of industrial strains of Saccharomyces cerevisiae.</title>
        <authorList>
            <person name="Borneman A.R."/>
            <person name="Desany B.A."/>
            <person name="Riches D."/>
            <person name="Affourtit J.P."/>
            <person name="Forgan A.H."/>
            <person name="Pretorius I.S."/>
            <person name="Egholm M."/>
            <person name="Chambers P.J."/>
        </authorList>
    </citation>
    <scope>NUCLEOTIDE SEQUENCE [LARGE SCALE GENOMIC DNA]</scope>
    <source>
        <strain>Lalvin QA23</strain>
    </source>
</reference>
<comment type="function">
    <text evidence="1">Component of the biogenesis of lysosome-related organelles complex-1 (BLOC-1), a complex that is involved in endosomal cargo sorting.</text>
</comment>
<comment type="subunit">
    <text evidence="1">Component of the biogenesis of lysosome-related organelles complex-1 (BLOC-1) composed of at least BLI1, BLS1, CNL1, KXD1, SNN1 and VAB2.</text>
</comment>
<comment type="subcellular location">
    <subcellularLocation>
        <location evidence="1">Cytoplasm</location>
    </subcellularLocation>
    <text evidence="1">Punctate pattern.</text>
</comment>
<comment type="similarity">
    <text evidence="4">Belongs to the BLOC1S4 family.</text>
</comment>
<sequence length="122" mass="13963">MQDNSSHSRESASAGDDPLGIDKLTVDYDYLLYKIRDYVQSIQLDTTELCKKQNEVMVNGIIENTIDKNIAKFKELLEKCDTLENHYEMLNQLAIITDTFKERIAEAVNNYNXLKKGASKSK</sequence>
<proteinExistence type="inferred from homology"/>
<keyword id="KW-0175">Coiled coil</keyword>
<keyword id="KW-0963">Cytoplasm</keyword>
<keyword id="KW-0813">Transport</keyword>
<organism>
    <name type="scientific">Saccharomyces cerevisiae (strain Lalvin QA23)</name>
    <name type="common">Baker's yeast</name>
    <dbReference type="NCBI Taxonomy" id="764098"/>
    <lineage>
        <taxon>Eukaryota</taxon>
        <taxon>Fungi</taxon>
        <taxon>Dikarya</taxon>
        <taxon>Ascomycota</taxon>
        <taxon>Saccharomycotina</taxon>
        <taxon>Saccharomycetes</taxon>
        <taxon>Saccharomycetales</taxon>
        <taxon>Saccharomycetaceae</taxon>
        <taxon>Saccharomyces</taxon>
    </lineage>
</organism>
<accession>E7KM17</accession>
<dbReference type="EMBL" id="ADVV01000023">
    <property type="protein sequence ID" value="EGA83344.1"/>
    <property type="molecule type" value="Genomic_DNA"/>
</dbReference>
<dbReference type="HOGENOM" id="CLU_141728_1_0_1"/>
<dbReference type="OrthoDB" id="35127at4893"/>
<dbReference type="GO" id="GO:0031083">
    <property type="term" value="C:BLOC-1 complex"/>
    <property type="evidence" value="ECO:0007669"/>
    <property type="project" value="InterPro"/>
</dbReference>
<dbReference type="GO" id="GO:0005737">
    <property type="term" value="C:cytoplasm"/>
    <property type="evidence" value="ECO:0007669"/>
    <property type="project" value="UniProtKB-SubCell"/>
</dbReference>
<dbReference type="GO" id="GO:0007032">
    <property type="term" value="P:endosome organization"/>
    <property type="evidence" value="ECO:0007669"/>
    <property type="project" value="TreeGrafter"/>
</dbReference>
<dbReference type="CDD" id="cd24144">
    <property type="entry name" value="BLOC1_CNL1"/>
    <property type="match status" value="1"/>
</dbReference>
<dbReference type="InterPro" id="IPR034455">
    <property type="entry name" value="CNL1"/>
</dbReference>
<dbReference type="PANTHER" id="PTHR39145">
    <property type="entry name" value="BIOGENESIS OF LYSOSOME-RELATED ORGANELLES COMPLEX 1 SUBUNIT CNL1"/>
    <property type="match status" value="1"/>
</dbReference>
<dbReference type="PANTHER" id="PTHR39145:SF1">
    <property type="entry name" value="BIOGENESIS OF LYSOSOME-RELATED ORGANELLES COMPLEX 1 SUBUNIT CNL1"/>
    <property type="match status" value="1"/>
</dbReference>
<evidence type="ECO:0000250" key="1"/>
<evidence type="ECO:0000255" key="2"/>
<evidence type="ECO:0000256" key="3">
    <source>
        <dbReference type="SAM" id="MobiDB-lite"/>
    </source>
</evidence>
<evidence type="ECO:0000305" key="4"/>
<gene>
    <name type="primary">CLN1</name>
    <name type="ORF">QA23_1057</name>
</gene>
<name>BL1S4_YEASL</name>
<feature type="chain" id="PRO_0000410652" description="Biogenesis of lysosome-related organelles complex 1 subunit CNL1">
    <location>
        <begin position="1"/>
        <end position="122"/>
    </location>
</feature>
<feature type="region of interest" description="Disordered" evidence="3">
    <location>
        <begin position="1"/>
        <end position="21"/>
    </location>
</feature>
<feature type="coiled-coil region" evidence="2">
    <location>
        <begin position="63"/>
        <end position="95"/>
    </location>
</feature>
<feature type="compositionally biased region" description="Basic and acidic residues" evidence="3">
    <location>
        <begin position="1"/>
        <end position="10"/>
    </location>
</feature>
<protein>
    <recommendedName>
        <fullName>Biogenesis of lysosome-related organelles complex 1 subunit CNL1</fullName>
        <shortName>BLOC-1 subunit CNL1</shortName>
    </recommendedName>
    <alternativeName>
        <fullName>CNO-like protein 1</fullName>
    </alternativeName>
</protein>